<reference key="1">
    <citation type="journal article" date="2004" name="Nat. Genet.">
        <title>Complete sequencing and characterization of 21,243 full-length human cDNAs.</title>
        <authorList>
            <person name="Ota T."/>
            <person name="Suzuki Y."/>
            <person name="Nishikawa T."/>
            <person name="Otsuki T."/>
            <person name="Sugiyama T."/>
            <person name="Irie R."/>
            <person name="Wakamatsu A."/>
            <person name="Hayashi K."/>
            <person name="Sato H."/>
            <person name="Nagai K."/>
            <person name="Kimura K."/>
            <person name="Makita H."/>
            <person name="Sekine M."/>
            <person name="Obayashi M."/>
            <person name="Nishi T."/>
            <person name="Shibahara T."/>
            <person name="Tanaka T."/>
            <person name="Ishii S."/>
            <person name="Yamamoto J."/>
            <person name="Saito K."/>
            <person name="Kawai Y."/>
            <person name="Isono Y."/>
            <person name="Nakamura Y."/>
            <person name="Nagahari K."/>
            <person name="Murakami K."/>
            <person name="Yasuda T."/>
            <person name="Iwayanagi T."/>
            <person name="Wagatsuma M."/>
            <person name="Shiratori A."/>
            <person name="Sudo H."/>
            <person name="Hosoiri T."/>
            <person name="Kaku Y."/>
            <person name="Kodaira H."/>
            <person name="Kondo H."/>
            <person name="Sugawara M."/>
            <person name="Takahashi M."/>
            <person name="Kanda K."/>
            <person name="Yokoi T."/>
            <person name="Furuya T."/>
            <person name="Kikkawa E."/>
            <person name="Omura Y."/>
            <person name="Abe K."/>
            <person name="Kamihara K."/>
            <person name="Katsuta N."/>
            <person name="Sato K."/>
            <person name="Tanikawa M."/>
            <person name="Yamazaki M."/>
            <person name="Ninomiya K."/>
            <person name="Ishibashi T."/>
            <person name="Yamashita H."/>
            <person name="Murakawa K."/>
            <person name="Fujimori K."/>
            <person name="Tanai H."/>
            <person name="Kimata M."/>
            <person name="Watanabe M."/>
            <person name="Hiraoka S."/>
            <person name="Chiba Y."/>
            <person name="Ishida S."/>
            <person name="Ono Y."/>
            <person name="Takiguchi S."/>
            <person name="Watanabe S."/>
            <person name="Yosida M."/>
            <person name="Hotuta T."/>
            <person name="Kusano J."/>
            <person name="Kanehori K."/>
            <person name="Takahashi-Fujii A."/>
            <person name="Hara H."/>
            <person name="Tanase T.-O."/>
            <person name="Nomura Y."/>
            <person name="Togiya S."/>
            <person name="Komai F."/>
            <person name="Hara R."/>
            <person name="Takeuchi K."/>
            <person name="Arita M."/>
            <person name="Imose N."/>
            <person name="Musashino K."/>
            <person name="Yuuki H."/>
            <person name="Oshima A."/>
            <person name="Sasaki N."/>
            <person name="Aotsuka S."/>
            <person name="Yoshikawa Y."/>
            <person name="Matsunawa H."/>
            <person name="Ichihara T."/>
            <person name="Shiohata N."/>
            <person name="Sano S."/>
            <person name="Moriya S."/>
            <person name="Momiyama H."/>
            <person name="Satoh N."/>
            <person name="Takami S."/>
            <person name="Terashima Y."/>
            <person name="Suzuki O."/>
            <person name="Nakagawa S."/>
            <person name="Senoh A."/>
            <person name="Mizoguchi H."/>
            <person name="Goto Y."/>
            <person name="Shimizu F."/>
            <person name="Wakebe H."/>
            <person name="Hishigaki H."/>
            <person name="Watanabe T."/>
            <person name="Sugiyama A."/>
            <person name="Takemoto M."/>
            <person name="Kawakami B."/>
            <person name="Yamazaki M."/>
            <person name="Watanabe K."/>
            <person name="Kumagai A."/>
            <person name="Itakura S."/>
            <person name="Fukuzumi Y."/>
            <person name="Fujimori Y."/>
            <person name="Komiyama M."/>
            <person name="Tashiro H."/>
            <person name="Tanigami A."/>
            <person name="Fujiwara T."/>
            <person name="Ono T."/>
            <person name="Yamada K."/>
            <person name="Fujii Y."/>
            <person name="Ozaki K."/>
            <person name="Hirao M."/>
            <person name="Ohmori Y."/>
            <person name="Kawabata A."/>
            <person name="Hikiji T."/>
            <person name="Kobatake N."/>
            <person name="Inagaki H."/>
            <person name="Ikema Y."/>
            <person name="Okamoto S."/>
            <person name="Okitani R."/>
            <person name="Kawakami T."/>
            <person name="Noguchi S."/>
            <person name="Itoh T."/>
            <person name="Shigeta K."/>
            <person name="Senba T."/>
            <person name="Matsumura K."/>
            <person name="Nakajima Y."/>
            <person name="Mizuno T."/>
            <person name="Morinaga M."/>
            <person name="Sasaki M."/>
            <person name="Togashi T."/>
            <person name="Oyama M."/>
            <person name="Hata H."/>
            <person name="Watanabe M."/>
            <person name="Komatsu T."/>
            <person name="Mizushima-Sugano J."/>
            <person name="Satoh T."/>
            <person name="Shirai Y."/>
            <person name="Takahashi Y."/>
            <person name="Nakagawa K."/>
            <person name="Okumura K."/>
            <person name="Nagase T."/>
            <person name="Nomura N."/>
            <person name="Kikuchi H."/>
            <person name="Masuho Y."/>
            <person name="Yamashita R."/>
            <person name="Nakai K."/>
            <person name="Yada T."/>
            <person name="Nakamura Y."/>
            <person name="Ohara O."/>
            <person name="Isogai T."/>
            <person name="Sugano S."/>
        </authorList>
    </citation>
    <scope>NUCLEOTIDE SEQUENCE [LARGE SCALE MRNA]</scope>
    <source>
        <tissue>Testis</tissue>
    </source>
</reference>
<reference key="2">
    <citation type="journal article" date="2007" name="BMC Genomics">
        <title>The full-ORF clone resource of the German cDNA consortium.</title>
        <authorList>
            <person name="Bechtel S."/>
            <person name="Rosenfelder H."/>
            <person name="Duda A."/>
            <person name="Schmidt C.P."/>
            <person name="Ernst U."/>
            <person name="Wellenreuther R."/>
            <person name="Mehrle A."/>
            <person name="Schuster C."/>
            <person name="Bahr A."/>
            <person name="Bloecker H."/>
            <person name="Heubner D."/>
            <person name="Hoerlein A."/>
            <person name="Michel G."/>
            <person name="Wedler H."/>
            <person name="Koehrer K."/>
            <person name="Ottenwaelder B."/>
            <person name="Poustka A."/>
            <person name="Wiemann S."/>
            <person name="Schupp I."/>
        </authorList>
    </citation>
    <scope>NUCLEOTIDE SEQUENCE [LARGE SCALE MRNA]</scope>
    <source>
        <tissue>Testis</tissue>
    </source>
</reference>
<reference key="3">
    <citation type="journal article" date="2003" name="Nature">
        <title>The DNA sequence of human chromosome 7.</title>
        <authorList>
            <person name="Hillier L.W."/>
            <person name="Fulton R.S."/>
            <person name="Fulton L.A."/>
            <person name="Graves T.A."/>
            <person name="Pepin K.H."/>
            <person name="Wagner-McPherson C."/>
            <person name="Layman D."/>
            <person name="Maas J."/>
            <person name="Jaeger S."/>
            <person name="Walker R."/>
            <person name="Wylie K."/>
            <person name="Sekhon M."/>
            <person name="Becker M.C."/>
            <person name="O'Laughlin M.D."/>
            <person name="Schaller M.E."/>
            <person name="Fewell G.A."/>
            <person name="Delehaunty K.D."/>
            <person name="Miner T.L."/>
            <person name="Nash W.E."/>
            <person name="Cordes M."/>
            <person name="Du H."/>
            <person name="Sun H."/>
            <person name="Edwards J."/>
            <person name="Bradshaw-Cordum H."/>
            <person name="Ali J."/>
            <person name="Andrews S."/>
            <person name="Isak A."/>
            <person name="Vanbrunt A."/>
            <person name="Nguyen C."/>
            <person name="Du F."/>
            <person name="Lamar B."/>
            <person name="Courtney L."/>
            <person name="Kalicki J."/>
            <person name="Ozersky P."/>
            <person name="Bielicki L."/>
            <person name="Scott K."/>
            <person name="Holmes A."/>
            <person name="Harkins R."/>
            <person name="Harris A."/>
            <person name="Strong C.M."/>
            <person name="Hou S."/>
            <person name="Tomlinson C."/>
            <person name="Dauphin-Kohlberg S."/>
            <person name="Kozlowicz-Reilly A."/>
            <person name="Leonard S."/>
            <person name="Rohlfing T."/>
            <person name="Rock S.M."/>
            <person name="Tin-Wollam A.-M."/>
            <person name="Abbott A."/>
            <person name="Minx P."/>
            <person name="Maupin R."/>
            <person name="Strowmatt C."/>
            <person name="Latreille P."/>
            <person name="Miller N."/>
            <person name="Johnson D."/>
            <person name="Murray J."/>
            <person name="Woessner J.P."/>
            <person name="Wendl M.C."/>
            <person name="Yang S.-P."/>
            <person name="Schultz B.R."/>
            <person name="Wallis J.W."/>
            <person name="Spieth J."/>
            <person name="Bieri T.A."/>
            <person name="Nelson J.O."/>
            <person name="Berkowicz N."/>
            <person name="Wohldmann P.E."/>
            <person name="Cook L.L."/>
            <person name="Hickenbotham M.T."/>
            <person name="Eldred J."/>
            <person name="Williams D."/>
            <person name="Bedell J.A."/>
            <person name="Mardis E.R."/>
            <person name="Clifton S.W."/>
            <person name="Chissoe S.L."/>
            <person name="Marra M.A."/>
            <person name="Raymond C."/>
            <person name="Haugen E."/>
            <person name="Gillett W."/>
            <person name="Zhou Y."/>
            <person name="James R."/>
            <person name="Phelps K."/>
            <person name="Iadanoto S."/>
            <person name="Bubb K."/>
            <person name="Simms E."/>
            <person name="Levy R."/>
            <person name="Clendenning J."/>
            <person name="Kaul R."/>
            <person name="Kent W.J."/>
            <person name="Furey T.S."/>
            <person name="Baertsch R.A."/>
            <person name="Brent M.R."/>
            <person name="Keibler E."/>
            <person name="Flicek P."/>
            <person name="Bork P."/>
            <person name="Suyama M."/>
            <person name="Bailey J.A."/>
            <person name="Portnoy M.E."/>
            <person name="Torrents D."/>
            <person name="Chinwalla A.T."/>
            <person name="Gish W.R."/>
            <person name="Eddy S.R."/>
            <person name="McPherson J.D."/>
            <person name="Olson M.V."/>
            <person name="Eichler E.E."/>
            <person name="Green E.D."/>
            <person name="Waterston R.H."/>
            <person name="Wilson R.K."/>
        </authorList>
    </citation>
    <scope>NUCLEOTIDE SEQUENCE [LARGE SCALE GENOMIC DNA]</scope>
</reference>
<reference key="4">
    <citation type="submission" date="2005-07" db="EMBL/GenBank/DDBJ databases">
        <authorList>
            <person name="Mural R.J."/>
            <person name="Istrail S."/>
            <person name="Sutton G.G."/>
            <person name="Florea L."/>
            <person name="Halpern A.L."/>
            <person name="Mobarry C.M."/>
            <person name="Lippert R."/>
            <person name="Walenz B."/>
            <person name="Shatkay H."/>
            <person name="Dew I."/>
            <person name="Miller J.R."/>
            <person name="Flanigan M.J."/>
            <person name="Edwards N.J."/>
            <person name="Bolanos R."/>
            <person name="Fasulo D."/>
            <person name="Halldorsson B.V."/>
            <person name="Hannenhalli S."/>
            <person name="Turner R."/>
            <person name="Yooseph S."/>
            <person name="Lu F."/>
            <person name="Nusskern D.R."/>
            <person name="Shue B.C."/>
            <person name="Zheng X.H."/>
            <person name="Zhong F."/>
            <person name="Delcher A.L."/>
            <person name="Huson D.H."/>
            <person name="Kravitz S.A."/>
            <person name="Mouchard L."/>
            <person name="Reinert K."/>
            <person name="Remington K.A."/>
            <person name="Clark A.G."/>
            <person name="Waterman M.S."/>
            <person name="Eichler E.E."/>
            <person name="Adams M.D."/>
            <person name="Hunkapiller M.W."/>
            <person name="Myers E.W."/>
            <person name="Venter J.C."/>
        </authorList>
    </citation>
    <scope>NUCLEOTIDE SEQUENCE [LARGE SCALE GENOMIC DNA]</scope>
</reference>
<reference key="5">
    <citation type="journal article" date="2004" name="Genome Res.">
        <title>The status, quality, and expansion of the NIH full-length cDNA project: the Mammalian Gene Collection (MGC).</title>
        <authorList>
            <consortium name="The MGC Project Team"/>
        </authorList>
    </citation>
    <scope>NUCLEOTIDE SEQUENCE [LARGE SCALE MRNA]</scope>
    <source>
        <tissue>Brain</tissue>
        <tissue>Eye</tissue>
    </source>
</reference>
<reference key="6">
    <citation type="journal article" date="2006" name="Cell">
        <title>Global, in vivo, and site-specific phosphorylation dynamics in signaling networks.</title>
        <authorList>
            <person name="Olsen J.V."/>
            <person name="Blagoev B."/>
            <person name="Gnad F."/>
            <person name="Macek B."/>
            <person name="Kumar C."/>
            <person name="Mortensen P."/>
            <person name="Mann M."/>
        </authorList>
    </citation>
    <scope>PHOSPHORYLATION [LARGE SCALE ANALYSIS] AT SER-212</scope>
    <scope>IDENTIFICATION BY MASS SPECTROMETRY [LARGE SCALE ANALYSIS]</scope>
    <source>
        <tissue>Cervix carcinoma</tissue>
    </source>
</reference>
<reference key="7">
    <citation type="journal article" date="2006" name="Fertil. Steril.">
        <title>Identification of ten novel genes involved in human spermatogenesis by microarray analysis of testicular tissue.</title>
        <authorList>
            <person name="Lin Y.H."/>
            <person name="Lin Y.M."/>
            <person name="Teng Y.N."/>
            <person name="Hsieh T.Y."/>
            <person name="Lin Y.S."/>
            <person name="Kuo P.L."/>
        </authorList>
    </citation>
    <scope>TISSUE SPECIFICITY</scope>
</reference>
<reference key="8">
    <citation type="journal article" date="2008" name="J. Cell Sci.">
        <title>EML3 is a nuclear microtubule-binding protein required for the correct alignment of chromosomes in metaphase.</title>
        <authorList>
            <person name="Tegha-Dunghu J."/>
            <person name="Neumann B."/>
            <person name="Reber S."/>
            <person name="Krause R."/>
            <person name="Erfle H."/>
            <person name="Walter T."/>
            <person name="Held M."/>
            <person name="Rogers P."/>
            <person name="Hupfeld K."/>
            <person name="Ruppert T."/>
            <person name="Ellenberg J."/>
            <person name="Gruss O.J."/>
        </authorList>
    </citation>
    <scope>SUBCELLULAR LOCATION</scope>
</reference>
<reference key="9">
    <citation type="journal article" date="2008" name="J. Proteome Res.">
        <title>Combining protein-based IMAC, peptide-based IMAC, and MudPIT for efficient phosphoproteomic analysis.</title>
        <authorList>
            <person name="Cantin G.T."/>
            <person name="Yi W."/>
            <person name="Lu B."/>
            <person name="Park S.K."/>
            <person name="Xu T."/>
            <person name="Lee J.-D."/>
            <person name="Yates J.R. III"/>
        </authorList>
    </citation>
    <scope>PHOSPHORYLATION [LARGE SCALE ANALYSIS] AT SER-259</scope>
    <scope>IDENTIFICATION BY MASS SPECTROMETRY [LARGE SCALE ANALYSIS]</scope>
    <source>
        <tissue>Cervix carcinoma</tissue>
    </source>
</reference>
<reference key="10">
    <citation type="journal article" date="2008" name="Proc. Natl. Acad. Sci. U.S.A.">
        <title>A quantitative atlas of mitotic phosphorylation.</title>
        <authorList>
            <person name="Dephoure N."/>
            <person name="Zhou C."/>
            <person name="Villen J."/>
            <person name="Beausoleil S.A."/>
            <person name="Bakalarski C.E."/>
            <person name="Elledge S.J."/>
            <person name="Gygi S.P."/>
        </authorList>
    </citation>
    <scope>PHOSPHORYLATION [LARGE SCALE ANALYSIS] AT SER-243; SER-251 AND SER-259</scope>
    <scope>IDENTIFICATION BY MASS SPECTROMETRY [LARGE SCALE ANALYSIS]</scope>
    <source>
        <tissue>Cervix carcinoma</tissue>
    </source>
</reference>
<reference key="11">
    <citation type="journal article" date="2009" name="Anal. Chem.">
        <title>Lys-N and trypsin cover complementary parts of the phosphoproteome in a refined SCX-based approach.</title>
        <authorList>
            <person name="Gauci S."/>
            <person name="Helbig A.O."/>
            <person name="Slijper M."/>
            <person name="Krijgsveld J."/>
            <person name="Heck A.J."/>
            <person name="Mohammed S."/>
        </authorList>
    </citation>
    <scope>IDENTIFICATION BY MASS SPECTROMETRY [LARGE SCALE ANALYSIS]</scope>
</reference>
<reference key="12">
    <citation type="journal article" date="2009" name="Sci. Signal.">
        <title>Quantitative phosphoproteomic analysis of T cell receptor signaling reveals system-wide modulation of protein-protein interactions.</title>
        <authorList>
            <person name="Mayya V."/>
            <person name="Lundgren D.H."/>
            <person name="Hwang S.-I."/>
            <person name="Rezaul K."/>
            <person name="Wu L."/>
            <person name="Eng J.K."/>
            <person name="Rodionov V."/>
            <person name="Han D.K."/>
        </authorList>
    </citation>
    <scope>PHOSPHORYLATION [LARGE SCALE ANALYSIS] AT SER-212; SER-243 AND SER-259</scope>
    <scope>IDENTIFICATION BY MASS SPECTROMETRY [LARGE SCALE ANALYSIS]</scope>
    <source>
        <tissue>Leukemic T-cell</tissue>
    </source>
</reference>
<reference key="13">
    <citation type="journal article" date="2010" name="Cell">
        <title>The protein composition of mitotic chromosomes determined using multiclassifier combinatorial proteomics.</title>
        <authorList>
            <person name="Ohta S."/>
            <person name="Bukowski-Wills J.C."/>
            <person name="Sanchez-Pulido L."/>
            <person name="Alves Fde L."/>
            <person name="Wood L."/>
            <person name="Chen Z.A."/>
            <person name="Platani M."/>
            <person name="Fischer L."/>
            <person name="Hudson D.F."/>
            <person name="Ponting C.P."/>
            <person name="Fukagawa T."/>
            <person name="Earnshaw W.C."/>
            <person name="Rappsilber J."/>
        </authorList>
    </citation>
    <scope>SUBCELLULAR LOCATION</scope>
</reference>
<reference key="14">
    <citation type="journal article" date="2010" name="Cell">
        <title>Quantitative interaction proteomics and genome-wide profiling of epigenetic histone marks and their readers.</title>
        <authorList>
            <person name="Vermeulen M."/>
            <person name="Eberl H.C."/>
            <person name="Matarese F."/>
            <person name="Marks H."/>
            <person name="Denissov S."/>
            <person name="Butter F."/>
            <person name="Lee K.K."/>
            <person name="Olsen J.V."/>
            <person name="Hyman A.A."/>
            <person name="Stunnenberg H.G."/>
            <person name="Mann M."/>
        </authorList>
    </citation>
    <scope>IDENTIFICATION IN THE ORC COMPLEX</scope>
    <scope>FUNCTION</scope>
</reference>
<reference key="15">
    <citation type="journal article" date="2010" name="Cell">
        <title>Nucleosome-interacting proteins regulated by DNA and histone methylation.</title>
        <authorList>
            <person name="Bartke T."/>
            <person name="Vermeulen M."/>
            <person name="Xhemalce B."/>
            <person name="Robson S.C."/>
            <person name="Mann M."/>
            <person name="Kouzarides T."/>
        </authorList>
    </citation>
    <scope>SUBCELLULAR LOCATION</scope>
    <scope>IDENTIFICATION IN THE ORC COMPLEX</scope>
    <scope>FUNCTION</scope>
</reference>
<reference key="16">
    <citation type="journal article" date="2010" name="Mol. Cell">
        <title>A WD-repeat protein stabilizes ORC binding to chromatin.</title>
        <authorList>
            <person name="Shen Z."/>
            <person name="Sathyan K.M."/>
            <person name="Geng Y."/>
            <person name="Zheng R."/>
            <person name="Chakraborty A."/>
            <person name="Freeman B."/>
            <person name="Wang F."/>
            <person name="Prasanth K.V."/>
            <person name="Prasanth S.G."/>
        </authorList>
    </citation>
    <scope>FUNCTION</scope>
    <scope>SUBCELLULAR LOCATION</scope>
    <scope>DOMAIN WD REPEATS</scope>
    <scope>IDENTIFICATION BY MASS SPECTROMETRY</scope>
    <scope>IDENTIFICATION IN THE ORC COMPLEX</scope>
    <scope>DEVELOPMENTAL STAGE</scope>
</reference>
<reference key="17">
    <citation type="journal article" date="2010" name="Sci. Signal.">
        <title>Quantitative phosphoproteomics reveals widespread full phosphorylation site occupancy during mitosis.</title>
        <authorList>
            <person name="Olsen J.V."/>
            <person name="Vermeulen M."/>
            <person name="Santamaria A."/>
            <person name="Kumar C."/>
            <person name="Miller M.L."/>
            <person name="Jensen L.J."/>
            <person name="Gnad F."/>
            <person name="Cox J."/>
            <person name="Jensen T.S."/>
            <person name="Nigg E.A."/>
            <person name="Brunak S."/>
            <person name="Mann M."/>
        </authorList>
    </citation>
    <scope>PHOSPHORYLATION [LARGE SCALE ANALYSIS] AT SER-212 AND SER-243</scope>
    <scope>IDENTIFICATION BY MASS SPECTROMETRY [LARGE SCALE ANALYSIS]</scope>
    <source>
        <tissue>Cervix carcinoma</tissue>
    </source>
</reference>
<reference key="18">
    <citation type="journal article" date="2011" name="Sci. Signal.">
        <title>System-wide temporal characterization of the proteome and phosphoproteome of human embryonic stem cell differentiation.</title>
        <authorList>
            <person name="Rigbolt K.T."/>
            <person name="Prokhorova T.A."/>
            <person name="Akimov V."/>
            <person name="Henningsen J."/>
            <person name="Johansen P.T."/>
            <person name="Kratchmarova I."/>
            <person name="Kassem M."/>
            <person name="Mann M."/>
            <person name="Olsen J.V."/>
            <person name="Blagoev B."/>
        </authorList>
    </citation>
    <scope>PHOSPHORYLATION [LARGE SCALE ANALYSIS] AT SER-212 AND SER-243</scope>
    <scope>IDENTIFICATION BY MASS SPECTROMETRY [LARGE SCALE ANALYSIS]</scope>
</reference>
<reference key="19">
    <citation type="journal article" date="2012" name="Cell Cycle">
        <title>Orc2 protects ORCA from ubiquitin-mediated degradation.</title>
        <authorList>
            <person name="Shen Z."/>
            <person name="Prasanth S.G."/>
        </authorList>
    </citation>
    <scope>INTERACTION WITH ORC2; CUL4A AND DDB1</scope>
    <scope>SUBCELLULAR LOCATION</scope>
    <scope>UBIQUITINATION</scope>
    <scope>DEVELOPMENTAL STAGE</scope>
</reference>
<reference key="20">
    <citation type="journal article" date="2012" name="J. Biol. Chem.">
        <title>Leucine-rich repeat and WD repeat-containing protein 1 is recruited to pericentric heterochromatin by trimethylated lysine 9 of histone H3 and maintains heterochromatin silencing.</title>
        <authorList>
            <person name="Chan K.M."/>
            <person name="Zhang Z."/>
        </authorList>
    </citation>
    <scope>FUNCTION</scope>
    <scope>BINDING TO HISTONE H3 AND H4 TRIMETHYLATION MARKS</scope>
    <scope>SUBCELLULAR LOCATION</scope>
    <scope>DOMAIN</scope>
</reference>
<reference key="21">
    <citation type="journal article" date="2012" name="Mol. Cell. Biol.">
        <title>Dynamic association of ORCA with prereplicative complex components regulates DNA replication initiation.</title>
        <authorList>
            <person name="Shen Z."/>
            <person name="Chakraborty A."/>
            <person name="Jain A."/>
            <person name="Giri S."/>
            <person name="Ha T."/>
            <person name="Prasanth K.V."/>
            <person name="Prasanth S.G."/>
        </authorList>
    </citation>
    <scope>FUNCTION</scope>
    <scope>INTERACTION WITH CDT1; GMNN; ORC1 AND ORC2</scope>
    <scope>STOICHIOMETRY OF THE COMPLEX</scope>
    <scope>DOMAIN</scope>
</reference>
<reference key="22">
    <citation type="journal article" date="2012" name="Proc. Natl. Acad. Sci. U.S.A.">
        <title>N-terminal acetylome analyses and functional insights of the N-terminal acetyltransferase NatB.</title>
        <authorList>
            <person name="Van Damme P."/>
            <person name="Lasa M."/>
            <person name="Polevoda B."/>
            <person name="Gazquez C."/>
            <person name="Elosegui-Artola A."/>
            <person name="Kim D.S."/>
            <person name="De Juan-Pardo E."/>
            <person name="Demeyer K."/>
            <person name="Hole K."/>
            <person name="Larrea E."/>
            <person name="Timmerman E."/>
            <person name="Prieto J."/>
            <person name="Arnesen T."/>
            <person name="Sherman F."/>
            <person name="Gevaert K."/>
            <person name="Aldabe R."/>
        </authorList>
    </citation>
    <scope>IDENTIFICATION BY MASS SPECTROMETRY [LARGE SCALE ANALYSIS]</scope>
</reference>
<reference key="23">
    <citation type="journal article" date="2013" name="J. Proteome Res.">
        <title>Toward a comprehensive characterization of a human cancer cell phosphoproteome.</title>
        <authorList>
            <person name="Zhou H."/>
            <person name="Di Palma S."/>
            <person name="Preisinger C."/>
            <person name="Peng M."/>
            <person name="Polat A.N."/>
            <person name="Heck A.J."/>
            <person name="Mohammed S."/>
        </authorList>
    </citation>
    <scope>PHOSPHORYLATION [LARGE SCALE ANALYSIS] AT SER-212; SER-243; SER-251 AND SER-259</scope>
    <scope>IDENTIFICATION BY MASS SPECTROMETRY [LARGE SCALE ANALYSIS]</scope>
    <source>
        <tissue>Cervix carcinoma</tissue>
        <tissue>Erythroleukemia</tissue>
    </source>
</reference>
<reference key="24">
    <citation type="journal article" date="2014" name="J. Proteomics">
        <title>An enzyme assisted RP-RPLC approach for in-depth analysis of human liver phosphoproteome.</title>
        <authorList>
            <person name="Bian Y."/>
            <person name="Song C."/>
            <person name="Cheng K."/>
            <person name="Dong M."/>
            <person name="Wang F."/>
            <person name="Huang J."/>
            <person name="Sun D."/>
            <person name="Wang L."/>
            <person name="Ye M."/>
            <person name="Zou H."/>
        </authorList>
    </citation>
    <scope>PHOSPHORYLATION [LARGE SCALE ANALYSIS] AT SER-212; SER-259 AND SER-264</scope>
    <scope>IDENTIFICATION BY MASS SPECTROMETRY [LARGE SCALE ANALYSIS]</scope>
    <source>
        <tissue>Liver</tissue>
    </source>
</reference>
<organism>
    <name type="scientific">Homo sapiens</name>
    <name type="common">Human</name>
    <dbReference type="NCBI Taxonomy" id="9606"/>
    <lineage>
        <taxon>Eukaryota</taxon>
        <taxon>Metazoa</taxon>
        <taxon>Chordata</taxon>
        <taxon>Craniata</taxon>
        <taxon>Vertebrata</taxon>
        <taxon>Euteleostomi</taxon>
        <taxon>Mammalia</taxon>
        <taxon>Eutheria</taxon>
        <taxon>Euarchontoglires</taxon>
        <taxon>Primates</taxon>
        <taxon>Haplorrhini</taxon>
        <taxon>Catarrhini</taxon>
        <taxon>Hominidae</taxon>
        <taxon>Homo</taxon>
    </lineage>
</organism>
<name>LRWD1_HUMAN</name>
<accession>Q9UFC0</accession>
<accession>A8K4K2</accession>
<accession>B2R9G2</accession>
<accession>Q8N0T9</accession>
<accession>Q8WV43</accession>
<accession>Q96GJ2</accession>
<protein>
    <recommendedName>
        <fullName>Leucine-rich repeat and WD repeat-containing protein 1</fullName>
    </recommendedName>
    <alternativeName>
        <fullName>Centromere protein 33</fullName>
        <shortName>CENP-33</shortName>
    </alternativeName>
    <alternativeName>
        <fullName>Origin recognition complex-associated protein</fullName>
        <shortName>ORC-associated protein</shortName>
        <shortName>ORCA</shortName>
    </alternativeName>
</protein>
<comment type="function">
    <text evidence="6 7 8 9 10">Required for G1/S transition. Recruits and stabilizes the origin recognition complex (ORC) onto chromatin during G1 to establish pre-replication complex (preRC) and to heterochromatic sites in post-replicated cells. Binds a combination of DNA and histone methylation repressive marks on heterochromatin. Binds histone H3 and H4 trimethylation marks H3K9me3, H3K27me3 and H4K20me3 in a cooperative manner with DNA methylation. Required for silencing of major satellite repeats. May be important ORC2, ORC3 and ORC4 stability.</text>
</comment>
<comment type="subunit">
    <text evidence="6 7 8 10 11">Integral component of the ORC complex. Directly interacts with CDT1, GMNN and ORC2. Interacts with ORC2 only when non-ubiquitinated; this interaction prevents LRWD1 ubiquitination and degradation. Some of these interactions are regulated in a cell-cycle dependent manner. Interaction with ORC1 occurs predominantly during G1. Association with phosphorylated ORC1 during mitosis is not efficient. Interaction with CDT1 occurs during G1 phase, as well as during mitosis with phosphorylated CDT1. Interaction with GMNN occurs from G1/S to mitosis. Interaction with ORC2 is observed throughout the cell cycle. The stoichiometry of the ORCA/ORC/CDT1/GMNN complex is 1:1:1:2. Interacts with CUL4A and DDB1; this interaction may lead to ubiquitination.</text>
</comment>
<comment type="subcellular location">
    <subcellularLocation>
        <location evidence="4">Nucleus</location>
    </subcellularLocation>
    <subcellularLocation>
        <location>Chromosome</location>
        <location>Centromere</location>
    </subcellularLocation>
    <subcellularLocation>
        <location>Chromosome</location>
        <location>Telomere</location>
    </subcellularLocation>
    <subcellularLocation>
        <location evidence="1">Cytoplasm</location>
        <location evidence="1">Cytoskeleton</location>
        <location evidence="1">Microtubule organizing center</location>
        <location evidence="1">Centrosome</location>
    </subcellularLocation>
    <subcellularLocation>
        <location evidence="5">Chromosome</location>
        <location evidence="5">Centromere</location>
        <location evidence="5">Kinetochore</location>
    </subcellularLocation>
    <text>Localizes to heterochromatin during G1 phase. Restricted to centromeres or telomeres as cells progress though S phase. When cells enter mitosis, relocalizes to centromeres. Recruitment to pericentric heterochromatin largely depends on the presence of H3K9me3.</text>
</comment>
<comment type="tissue specificity">
    <text evidence="3">Testis-specific. Drastically down-regulated in testis from patients with Sertoli cell-only syndrome (SCOS).</text>
</comment>
<comment type="developmental stage">
    <text evidence="7 11">Regulated in a cell-cycle dependent manner. Highest expression in G1 phase. Expression decreases during S phase, rises again during G2 and drops during mitosis (at protein level). In contrast to protein levels, transcript levels do not show any significant variation during different stages of the cell cycle (PubMed:22935713).</text>
</comment>
<comment type="domain">
    <text evidence="7 9 10">The entire WD repeat region is required for the interaction with ORC, CDT1 and GMNN, as well as for association with chromatin and for binding to histone H3 and H4 trimethylation marks H3K9me3 and H4K20me3.</text>
</comment>
<comment type="PTM">
    <text evidence="11">Ubiquitinated; undergoes 'Lys-48'-linked polyubiquitination leading to proteasomal degradation. Ubiquitination occurs within the WD repeats at the end of the G1 phase. Ubiquitination may be catalyzed by the CUL4-DDB1 E3 ubiquitin-protein ligase complex and other E3 ligases.</text>
</comment>
<comment type="similarity">
    <text evidence="13">Belongs to the LRWD1 family.</text>
</comment>
<gene>
    <name type="primary">LRWD1</name>
    <name evidence="12" type="synonym">CENP-33</name>
    <name type="synonym">ORCA</name>
</gene>
<dbReference type="EMBL" id="AK290967">
    <property type="protein sequence ID" value="BAF83656.1"/>
    <property type="molecule type" value="mRNA"/>
</dbReference>
<dbReference type="EMBL" id="AK313771">
    <property type="protein sequence ID" value="BAG36509.1"/>
    <property type="molecule type" value="mRNA"/>
</dbReference>
<dbReference type="EMBL" id="AL133057">
    <property type="protein sequence ID" value="CAB61382.2"/>
    <property type="molecule type" value="mRNA"/>
</dbReference>
<dbReference type="EMBL" id="AC093668">
    <property type="status" value="NOT_ANNOTATED_CDS"/>
    <property type="molecule type" value="Genomic_DNA"/>
</dbReference>
<dbReference type="EMBL" id="CH471197">
    <property type="protein sequence ID" value="EAW50250.1"/>
    <property type="molecule type" value="Genomic_DNA"/>
</dbReference>
<dbReference type="EMBL" id="BC009436">
    <property type="protein sequence ID" value="AAH09436.1"/>
    <property type="molecule type" value="mRNA"/>
</dbReference>
<dbReference type="EMBL" id="BC018769">
    <property type="protein sequence ID" value="AAH18769.1"/>
    <property type="molecule type" value="mRNA"/>
</dbReference>
<dbReference type="EMBL" id="BC030547">
    <property type="protein sequence ID" value="AAH30547.1"/>
    <property type="molecule type" value="mRNA"/>
</dbReference>
<dbReference type="CCDS" id="CCDS34715.1"/>
<dbReference type="PIR" id="T42659">
    <property type="entry name" value="T42659"/>
</dbReference>
<dbReference type="RefSeq" id="NP_001304650.1">
    <property type="nucleotide sequence ID" value="NM_001317721.1"/>
</dbReference>
<dbReference type="RefSeq" id="NP_690852.1">
    <property type="nucleotide sequence ID" value="NM_152892.3"/>
</dbReference>
<dbReference type="SMR" id="Q9UFC0"/>
<dbReference type="BioGRID" id="128790">
    <property type="interactions" value="125"/>
</dbReference>
<dbReference type="FunCoup" id="Q9UFC0">
    <property type="interactions" value="2109"/>
</dbReference>
<dbReference type="IntAct" id="Q9UFC0">
    <property type="interactions" value="49"/>
</dbReference>
<dbReference type="MINT" id="Q9UFC0"/>
<dbReference type="STRING" id="9606.ENSP00000292616"/>
<dbReference type="GlyGen" id="Q9UFC0">
    <property type="glycosylation" value="1 site, 1 O-linked glycan (1 site)"/>
</dbReference>
<dbReference type="iPTMnet" id="Q9UFC0"/>
<dbReference type="PhosphoSitePlus" id="Q9UFC0"/>
<dbReference type="SwissPalm" id="Q9UFC0"/>
<dbReference type="BioMuta" id="LRWD1"/>
<dbReference type="DMDM" id="74761931"/>
<dbReference type="jPOST" id="Q9UFC0"/>
<dbReference type="MassIVE" id="Q9UFC0"/>
<dbReference type="PaxDb" id="9606-ENSP00000292616"/>
<dbReference type="PeptideAtlas" id="Q9UFC0"/>
<dbReference type="ProteomicsDB" id="84177"/>
<dbReference type="Pumba" id="Q9UFC0"/>
<dbReference type="Antibodypedia" id="16796">
    <property type="antibodies" value="108 antibodies from 22 providers"/>
</dbReference>
<dbReference type="DNASU" id="222229"/>
<dbReference type="Ensembl" id="ENST00000292616.10">
    <property type="protein sequence ID" value="ENSP00000292616.5"/>
    <property type="gene ID" value="ENSG00000161036.13"/>
</dbReference>
<dbReference type="GeneID" id="222229"/>
<dbReference type="KEGG" id="hsa:222229"/>
<dbReference type="MANE-Select" id="ENST00000292616.10">
    <property type="protein sequence ID" value="ENSP00000292616.5"/>
    <property type="RefSeq nucleotide sequence ID" value="NM_152892.3"/>
    <property type="RefSeq protein sequence ID" value="NP_690852.1"/>
</dbReference>
<dbReference type="UCSC" id="uc003uzn.4">
    <property type="organism name" value="human"/>
</dbReference>
<dbReference type="AGR" id="HGNC:21769"/>
<dbReference type="CTD" id="222229"/>
<dbReference type="DisGeNET" id="222229"/>
<dbReference type="GeneCards" id="LRWD1"/>
<dbReference type="HGNC" id="HGNC:21769">
    <property type="gene designation" value="LRWD1"/>
</dbReference>
<dbReference type="HPA" id="ENSG00000161036">
    <property type="expression patterns" value="Tissue enriched (testis)"/>
</dbReference>
<dbReference type="MIM" id="615167">
    <property type="type" value="gene"/>
</dbReference>
<dbReference type="neXtProt" id="NX_Q9UFC0"/>
<dbReference type="OpenTargets" id="ENSG00000161036"/>
<dbReference type="PharmGKB" id="PA162394694"/>
<dbReference type="VEuPathDB" id="HostDB:ENSG00000161036"/>
<dbReference type="eggNOG" id="KOG0619">
    <property type="taxonomic scope" value="Eukaryota"/>
</dbReference>
<dbReference type="GeneTree" id="ENSGT00940000154248"/>
<dbReference type="HOGENOM" id="CLU_022994_0_0_1"/>
<dbReference type="InParanoid" id="Q9UFC0"/>
<dbReference type="OMA" id="TCPDKGI"/>
<dbReference type="OrthoDB" id="7318948at2759"/>
<dbReference type="PAN-GO" id="Q9UFC0">
    <property type="GO annotations" value="4 GO annotations based on evolutionary models"/>
</dbReference>
<dbReference type="PhylomeDB" id="Q9UFC0"/>
<dbReference type="TreeFam" id="TF329554"/>
<dbReference type="PathwayCommons" id="Q9UFC0"/>
<dbReference type="SignaLink" id="Q9UFC0"/>
<dbReference type="BioGRID-ORCS" id="222229">
    <property type="hits" value="51 hits in 1167 CRISPR screens"/>
</dbReference>
<dbReference type="ChiTaRS" id="LRWD1">
    <property type="organism name" value="human"/>
</dbReference>
<dbReference type="GenomeRNAi" id="222229"/>
<dbReference type="Pharos" id="Q9UFC0">
    <property type="development level" value="Tbio"/>
</dbReference>
<dbReference type="PRO" id="PR:Q9UFC0"/>
<dbReference type="Proteomes" id="UP000005640">
    <property type="component" value="Chromosome 7"/>
</dbReference>
<dbReference type="RNAct" id="Q9UFC0">
    <property type="molecule type" value="protein"/>
</dbReference>
<dbReference type="Bgee" id="ENSG00000161036">
    <property type="expression patterns" value="Expressed in left testis and 174 other cell types or tissues"/>
</dbReference>
<dbReference type="ExpressionAtlas" id="Q9UFC0">
    <property type="expression patterns" value="baseline and differential"/>
</dbReference>
<dbReference type="GO" id="GO:0005813">
    <property type="term" value="C:centrosome"/>
    <property type="evidence" value="ECO:0007669"/>
    <property type="project" value="UniProtKB-SubCell"/>
</dbReference>
<dbReference type="GO" id="GO:0000781">
    <property type="term" value="C:chromosome, telomeric region"/>
    <property type="evidence" value="ECO:0000314"/>
    <property type="project" value="GO_Central"/>
</dbReference>
<dbReference type="GO" id="GO:0005737">
    <property type="term" value="C:cytoplasm"/>
    <property type="evidence" value="ECO:0007669"/>
    <property type="project" value="UniProtKB-KW"/>
</dbReference>
<dbReference type="GO" id="GO:0043231">
    <property type="term" value="C:intracellular membrane-bounded organelle"/>
    <property type="evidence" value="ECO:0000314"/>
    <property type="project" value="HPA"/>
</dbReference>
<dbReference type="GO" id="GO:0000776">
    <property type="term" value="C:kinetochore"/>
    <property type="evidence" value="ECO:0000314"/>
    <property type="project" value="UniProtKB"/>
</dbReference>
<dbReference type="GO" id="GO:0005664">
    <property type="term" value="C:nuclear origin of replication recognition complex"/>
    <property type="evidence" value="ECO:0000314"/>
    <property type="project" value="UniProtKB"/>
</dbReference>
<dbReference type="GO" id="GO:0005730">
    <property type="term" value="C:nucleolus"/>
    <property type="evidence" value="ECO:0000314"/>
    <property type="project" value="HPA"/>
</dbReference>
<dbReference type="GO" id="GO:0005654">
    <property type="term" value="C:nucleoplasm"/>
    <property type="evidence" value="ECO:0000314"/>
    <property type="project" value="HPA"/>
</dbReference>
<dbReference type="GO" id="GO:0005634">
    <property type="term" value="C:nucleus"/>
    <property type="evidence" value="ECO:0000314"/>
    <property type="project" value="UniProtKB"/>
</dbReference>
<dbReference type="GO" id="GO:0005721">
    <property type="term" value="C:pericentric heterochromatin"/>
    <property type="evidence" value="ECO:0000314"/>
    <property type="project" value="UniProtKB"/>
</dbReference>
<dbReference type="GO" id="GO:0003682">
    <property type="term" value="F:chromatin binding"/>
    <property type="evidence" value="ECO:0000314"/>
    <property type="project" value="UniProtKB"/>
</dbReference>
<dbReference type="GO" id="GO:0061628">
    <property type="term" value="F:histone H3K27me3 reader activity"/>
    <property type="evidence" value="ECO:0000314"/>
    <property type="project" value="UniProtKB"/>
</dbReference>
<dbReference type="GO" id="GO:0008327">
    <property type="term" value="F:methyl-CpG binding"/>
    <property type="evidence" value="ECO:0000314"/>
    <property type="project" value="UniProtKB"/>
</dbReference>
<dbReference type="GO" id="GO:0006325">
    <property type="term" value="P:chromatin organization"/>
    <property type="evidence" value="ECO:0000315"/>
    <property type="project" value="UniProtKB"/>
</dbReference>
<dbReference type="GO" id="GO:0006270">
    <property type="term" value="P:DNA replication initiation"/>
    <property type="evidence" value="ECO:0000304"/>
    <property type="project" value="UniProtKB"/>
</dbReference>
<dbReference type="GO" id="GO:0071169">
    <property type="term" value="P:establishment of protein localization to chromatin"/>
    <property type="evidence" value="ECO:0000314"/>
    <property type="project" value="UniProtKB"/>
</dbReference>
<dbReference type="FunFam" id="2.130.10.10:FF:000488">
    <property type="entry name" value="Leucine-rich repeat and WD repeat-containing protein 1"/>
    <property type="match status" value="1"/>
</dbReference>
<dbReference type="FunFam" id="3.80.10.10:FF:000429">
    <property type="entry name" value="Leucine-rich repeat and WD repeat-containing protein 1"/>
    <property type="match status" value="1"/>
</dbReference>
<dbReference type="Gene3D" id="3.80.10.10">
    <property type="entry name" value="Ribonuclease Inhibitor"/>
    <property type="match status" value="1"/>
</dbReference>
<dbReference type="Gene3D" id="2.130.10.10">
    <property type="entry name" value="YVTN repeat-like/Quinoprotein amine dehydrogenase"/>
    <property type="match status" value="1"/>
</dbReference>
<dbReference type="InterPro" id="IPR001611">
    <property type="entry name" value="Leu-rich_rpt"/>
</dbReference>
<dbReference type="InterPro" id="IPR003591">
    <property type="entry name" value="Leu-rich_rpt_typical-subtyp"/>
</dbReference>
<dbReference type="InterPro" id="IPR032675">
    <property type="entry name" value="LRR_dom_sf"/>
</dbReference>
<dbReference type="InterPro" id="IPR056363">
    <property type="entry name" value="LRR_LRWD1_dom"/>
</dbReference>
<dbReference type="InterPro" id="IPR052489">
    <property type="entry name" value="LRWD1"/>
</dbReference>
<dbReference type="InterPro" id="IPR015943">
    <property type="entry name" value="WD40/YVTN_repeat-like_dom_sf"/>
</dbReference>
<dbReference type="InterPro" id="IPR019775">
    <property type="entry name" value="WD40_repeat_CS"/>
</dbReference>
<dbReference type="InterPro" id="IPR036322">
    <property type="entry name" value="WD40_repeat_dom_sf"/>
</dbReference>
<dbReference type="InterPro" id="IPR001680">
    <property type="entry name" value="WD40_rpt"/>
</dbReference>
<dbReference type="InterPro" id="IPR056160">
    <property type="entry name" value="WD_LRWD1"/>
</dbReference>
<dbReference type="PANTHER" id="PTHR24370:SF10">
    <property type="entry name" value="LEUCINE-RICH REPEAT AND WD REPEAT-CONTAINING PROTEIN 1"/>
    <property type="match status" value="1"/>
</dbReference>
<dbReference type="PANTHER" id="PTHR24370">
    <property type="entry name" value="OPTICIN"/>
    <property type="match status" value="1"/>
</dbReference>
<dbReference type="Pfam" id="PF23211">
    <property type="entry name" value="LRR_LRWD1"/>
    <property type="match status" value="1"/>
</dbReference>
<dbReference type="Pfam" id="PF23215">
    <property type="entry name" value="WD_LRWD1"/>
    <property type="match status" value="1"/>
</dbReference>
<dbReference type="SMART" id="SM00369">
    <property type="entry name" value="LRR_TYP"/>
    <property type="match status" value="1"/>
</dbReference>
<dbReference type="SMART" id="SM00320">
    <property type="entry name" value="WD40"/>
    <property type="match status" value="3"/>
</dbReference>
<dbReference type="SUPFAM" id="SSF52058">
    <property type="entry name" value="L domain-like"/>
    <property type="match status" value="1"/>
</dbReference>
<dbReference type="SUPFAM" id="SSF50978">
    <property type="entry name" value="WD40 repeat-like"/>
    <property type="match status" value="1"/>
</dbReference>
<dbReference type="PROSITE" id="PS51450">
    <property type="entry name" value="LRR"/>
    <property type="match status" value="3"/>
</dbReference>
<dbReference type="PROSITE" id="PS00678">
    <property type="entry name" value="WD_REPEATS_1"/>
    <property type="match status" value="1"/>
</dbReference>
<dbReference type="PROSITE" id="PS50082">
    <property type="entry name" value="WD_REPEATS_2"/>
    <property type="match status" value="1"/>
</dbReference>
<dbReference type="PROSITE" id="PS50294">
    <property type="entry name" value="WD_REPEATS_REGION"/>
    <property type="match status" value="1"/>
</dbReference>
<sequence>MGPLSARLLMQRGRPKSDRLGKIRSLDLSGLELLSEHLDPKLLCRLTQLQELDLSNNHLETLPDNLGLSHLRVLRCANNQLGDVTALCQFPKLEELSLEGNPFLTVNDNLKVSFLLPTLRKVNGKDASSTYSQVENLNRELTSRVTAHWEKFMATLGPEEEAEKAQADFVKSAVRDVRYGPESLSEFTQWRVRMISEELVAASRTQVQKANSPEKPPEAGAAHKPRARLAALKRPDDVPLSLSPSKRACASPSAQVEGSPVAGSDGSQPAVKLEPLHFLQCHSKNNSPQDLETQLWACAFEPAWEEGATSQTVATCGGEAVCVIDCQTGIVLHKYKAPGEEFFSVAWTALMVVTQAGHKKRWSVLAAAGLRGLVRLLHVRAGFCCGVIRAHKKAIATLCFSPAHETHLFTASYDKRIILWDIGVPNQDYEFQASQLLTLDTTSIPLRLCPVASCPDARLLAGCEGGCCCWDVRLDQPQKRRVCEVEFVFSEGSEASGRRVDGLAFVNEDIVASKGSGLGTICLWSWRQTWGGRGSQSTVAVVVLARLQWSSTELAYFSLSACPDKGIVLCGDEEGNVWLYDVSNILKQPPLLPAALQAPTQILKWPQPWALGQVVTKTMVNTVVANASFTYLTALTDSNIVAIWGRM</sequence>
<evidence type="ECO:0000250" key="1">
    <source>
        <dbReference type="UniProtKB" id="Q8BUI3"/>
    </source>
</evidence>
<evidence type="ECO:0000256" key="2">
    <source>
        <dbReference type="SAM" id="MobiDB-lite"/>
    </source>
</evidence>
<evidence type="ECO:0000269" key="3">
    <source>
    </source>
</evidence>
<evidence type="ECO:0000269" key="4">
    <source>
    </source>
</evidence>
<evidence type="ECO:0000269" key="5">
    <source>
    </source>
</evidence>
<evidence type="ECO:0000269" key="6">
    <source>
    </source>
</evidence>
<evidence type="ECO:0000269" key="7">
    <source>
    </source>
</evidence>
<evidence type="ECO:0000269" key="8">
    <source>
    </source>
</evidence>
<evidence type="ECO:0000269" key="9">
    <source>
    </source>
</evidence>
<evidence type="ECO:0000269" key="10">
    <source>
    </source>
</evidence>
<evidence type="ECO:0000269" key="11">
    <source>
    </source>
</evidence>
<evidence type="ECO:0000303" key="12">
    <source>
    </source>
</evidence>
<evidence type="ECO:0000305" key="13"/>
<evidence type="ECO:0007744" key="14">
    <source>
    </source>
</evidence>
<evidence type="ECO:0007744" key="15">
    <source>
    </source>
</evidence>
<evidence type="ECO:0007744" key="16">
    <source>
    </source>
</evidence>
<evidence type="ECO:0007744" key="17">
    <source>
    </source>
</evidence>
<evidence type="ECO:0007744" key="18">
    <source>
    </source>
</evidence>
<evidence type="ECO:0007744" key="19">
    <source>
    </source>
</evidence>
<evidence type="ECO:0007744" key="20">
    <source>
    </source>
</evidence>
<evidence type="ECO:0007744" key="21">
    <source>
    </source>
</evidence>
<feature type="chain" id="PRO_0000310994" description="Leucine-rich repeat and WD repeat-containing protein 1">
    <location>
        <begin position="1"/>
        <end position="647"/>
    </location>
</feature>
<feature type="repeat" description="LRR 1">
    <location>
        <begin position="22"/>
        <end position="43"/>
    </location>
</feature>
<feature type="repeat" description="LRR 2">
    <location>
        <begin position="48"/>
        <end position="69"/>
    </location>
</feature>
<feature type="repeat" description="LRR 3">
    <location>
        <begin position="70"/>
        <end position="91"/>
    </location>
</feature>
<feature type="repeat" description="LRR 4">
    <location>
        <begin position="92"/>
        <end position="113"/>
    </location>
</feature>
<feature type="repeat" description="WD 1">
    <location>
        <begin position="282"/>
        <end position="335"/>
    </location>
</feature>
<feature type="repeat" description="WD 2">
    <location>
        <begin position="341"/>
        <end position="379"/>
    </location>
</feature>
<feature type="repeat" description="WD 3">
    <location>
        <begin position="383"/>
        <end position="422"/>
    </location>
</feature>
<feature type="repeat" description="WD 4">
    <location>
        <begin position="426"/>
        <end position="472"/>
    </location>
</feature>
<feature type="repeat" description="WD 5">
    <location>
        <begin position="484"/>
        <end position="526"/>
    </location>
</feature>
<feature type="repeat" description="WD 6">
    <location>
        <begin position="542"/>
        <end position="582"/>
    </location>
</feature>
<feature type="repeat" description="WD 7">
    <location>
        <begin position="598"/>
        <end position="646"/>
    </location>
</feature>
<feature type="region of interest" description="Disordered" evidence="2">
    <location>
        <begin position="204"/>
        <end position="267"/>
    </location>
</feature>
<feature type="modified residue" description="Phosphoserine" evidence="14 17 18 19 20 21">
    <location>
        <position position="212"/>
    </location>
</feature>
<feature type="modified residue" description="Phosphoserine" evidence="16 17 18 19 20">
    <location>
        <position position="243"/>
    </location>
</feature>
<feature type="modified residue" description="Phosphoserine" evidence="16 20">
    <location>
        <position position="251"/>
    </location>
</feature>
<feature type="modified residue" description="Phosphoserine" evidence="15 16 17 20 21">
    <location>
        <position position="259"/>
    </location>
</feature>
<feature type="modified residue" description="Phosphoserine" evidence="21">
    <location>
        <position position="264"/>
    </location>
</feature>
<feature type="sequence conflict" description="In Ref. 1; BAF83656." evidence="13" ref="1">
    <original>F</original>
    <variation>S</variation>
    <location>
        <position position="629"/>
    </location>
</feature>
<keyword id="KW-0137">Centromere</keyword>
<keyword id="KW-0156">Chromatin regulator</keyword>
<keyword id="KW-0158">Chromosome</keyword>
<keyword id="KW-0963">Cytoplasm</keyword>
<keyword id="KW-0206">Cytoskeleton</keyword>
<keyword id="KW-0235">DNA replication</keyword>
<keyword id="KW-0995">Kinetochore</keyword>
<keyword id="KW-0433">Leucine-rich repeat</keyword>
<keyword id="KW-0539">Nucleus</keyword>
<keyword id="KW-0597">Phosphoprotein</keyword>
<keyword id="KW-1267">Proteomics identification</keyword>
<keyword id="KW-1185">Reference proteome</keyword>
<keyword id="KW-0677">Repeat</keyword>
<keyword id="KW-0779">Telomere</keyword>
<keyword id="KW-0832">Ubl conjugation</keyword>
<keyword id="KW-0853">WD repeat</keyword>
<proteinExistence type="evidence at protein level"/>